<name>Y975_STRPB</name>
<comment type="function">
    <text evidence="1">Might take part in the signal recognition particle (SRP) pathway. This is inferred from the conservation of its genetic proximity to ftsY/ffh. May be a regulatory protein.</text>
</comment>
<comment type="similarity">
    <text evidence="1">Belongs to the UPF0122 family.</text>
</comment>
<reference key="1">
    <citation type="journal article" date="2006" name="Proc. Natl. Acad. Sci. U.S.A.">
        <title>Molecular genetic anatomy of inter- and intraserotype variation in the human bacterial pathogen group A Streptococcus.</title>
        <authorList>
            <person name="Beres S.B."/>
            <person name="Richter E.W."/>
            <person name="Nagiec M.J."/>
            <person name="Sumby P."/>
            <person name="Porcella S.F."/>
            <person name="DeLeo F.R."/>
            <person name="Musser J.M."/>
        </authorList>
    </citation>
    <scope>NUCLEOTIDE SEQUENCE [LARGE SCALE GENOMIC DNA]</scope>
    <source>
        <strain>MGAS2096</strain>
    </source>
</reference>
<sequence>MNIMEIEKTNRMNALFEFYAALLTDKQMNYIELYYADDYSLAEIADEFGVSRQAVYDNIKRTEKILETYEMKLHMYSDYVVRSEIFDDMIAHYPHDEYLQEKISILTSIDNRE</sequence>
<accession>Q1JBN1</accession>
<organism>
    <name type="scientific">Streptococcus pyogenes serotype M12 (strain MGAS2096)</name>
    <dbReference type="NCBI Taxonomy" id="370553"/>
    <lineage>
        <taxon>Bacteria</taxon>
        <taxon>Bacillati</taxon>
        <taxon>Bacillota</taxon>
        <taxon>Bacilli</taxon>
        <taxon>Lactobacillales</taxon>
        <taxon>Streptococcaceae</taxon>
        <taxon>Streptococcus</taxon>
    </lineage>
</organism>
<evidence type="ECO:0000255" key="1">
    <source>
        <dbReference type="HAMAP-Rule" id="MF_00245"/>
    </source>
</evidence>
<feature type="chain" id="PRO_1000012544" description="UPF0122 protein MGAS2096_Spy0975">
    <location>
        <begin position="1"/>
        <end position="113"/>
    </location>
</feature>
<dbReference type="EMBL" id="CP000261">
    <property type="protein sequence ID" value="ABF36027.1"/>
    <property type="molecule type" value="Genomic_DNA"/>
</dbReference>
<dbReference type="SMR" id="Q1JBN1"/>
<dbReference type="KEGG" id="spj:MGAS2096_Spy0975"/>
<dbReference type="HOGENOM" id="CLU_129218_1_1_9"/>
<dbReference type="Gene3D" id="1.10.10.10">
    <property type="entry name" value="Winged helix-like DNA-binding domain superfamily/Winged helix DNA-binding domain"/>
    <property type="match status" value="1"/>
</dbReference>
<dbReference type="HAMAP" id="MF_00245">
    <property type="entry name" value="UPF0122"/>
    <property type="match status" value="1"/>
</dbReference>
<dbReference type="InterPro" id="IPR013324">
    <property type="entry name" value="RNA_pol_sigma_r3/r4-like"/>
</dbReference>
<dbReference type="InterPro" id="IPR007394">
    <property type="entry name" value="UPF0122"/>
</dbReference>
<dbReference type="InterPro" id="IPR054831">
    <property type="entry name" value="UPF0122_fam_protein"/>
</dbReference>
<dbReference type="InterPro" id="IPR036388">
    <property type="entry name" value="WH-like_DNA-bd_sf"/>
</dbReference>
<dbReference type="NCBIfam" id="NF001066">
    <property type="entry name" value="PRK00118.1-1"/>
    <property type="match status" value="1"/>
</dbReference>
<dbReference type="NCBIfam" id="NF001068">
    <property type="entry name" value="PRK00118.1-4"/>
    <property type="match status" value="1"/>
</dbReference>
<dbReference type="NCBIfam" id="NF001070">
    <property type="entry name" value="PRK00118.1-6"/>
    <property type="match status" value="1"/>
</dbReference>
<dbReference type="NCBIfam" id="NF045758">
    <property type="entry name" value="YlxM"/>
    <property type="match status" value="1"/>
</dbReference>
<dbReference type="PANTHER" id="PTHR40083">
    <property type="entry name" value="UPF0122 PROTEIN CBO2450/CLC_2298"/>
    <property type="match status" value="1"/>
</dbReference>
<dbReference type="PANTHER" id="PTHR40083:SF1">
    <property type="entry name" value="UPF0122 PROTEIN YLXM"/>
    <property type="match status" value="1"/>
</dbReference>
<dbReference type="Pfam" id="PF04297">
    <property type="entry name" value="UPF0122"/>
    <property type="match status" value="1"/>
</dbReference>
<dbReference type="SUPFAM" id="SSF88659">
    <property type="entry name" value="Sigma3 and sigma4 domains of RNA polymerase sigma factors"/>
    <property type="match status" value="1"/>
</dbReference>
<protein>
    <recommendedName>
        <fullName evidence="1">UPF0122 protein MGAS2096_Spy0975</fullName>
    </recommendedName>
</protein>
<gene>
    <name type="ordered locus">MGAS2096_Spy0975</name>
</gene>
<proteinExistence type="inferred from homology"/>